<organism>
    <name type="scientific">Streptomyces avermitilis (strain ATCC 31267 / DSM 46492 / JCM 5070 / NBRC 14893 / NCIMB 12804 / NRRL 8165 / MA-4680)</name>
    <dbReference type="NCBI Taxonomy" id="227882"/>
    <lineage>
        <taxon>Bacteria</taxon>
        <taxon>Bacillati</taxon>
        <taxon>Actinomycetota</taxon>
        <taxon>Actinomycetes</taxon>
        <taxon>Kitasatosporales</taxon>
        <taxon>Streptomycetaceae</taxon>
        <taxon>Streptomyces</taxon>
    </lineage>
</organism>
<protein>
    <recommendedName>
        <fullName evidence="1">Hydrogenase maturation factor HypA</fullName>
    </recommendedName>
</protein>
<proteinExistence type="inferred from homology"/>
<name>HYPA_STRAW</name>
<reference key="1">
    <citation type="journal article" date="2001" name="Proc. Natl. Acad. Sci. U.S.A.">
        <title>Genome sequence of an industrial microorganism Streptomyces avermitilis: deducing the ability of producing secondary metabolites.</title>
        <authorList>
            <person name="Omura S."/>
            <person name="Ikeda H."/>
            <person name="Ishikawa J."/>
            <person name="Hanamoto A."/>
            <person name="Takahashi C."/>
            <person name="Shinose M."/>
            <person name="Takahashi Y."/>
            <person name="Horikawa H."/>
            <person name="Nakazawa H."/>
            <person name="Osonoe T."/>
            <person name="Kikuchi H."/>
            <person name="Shiba T."/>
            <person name="Sakaki Y."/>
            <person name="Hattori M."/>
        </authorList>
    </citation>
    <scope>NUCLEOTIDE SEQUENCE [LARGE SCALE GENOMIC DNA]</scope>
    <source>
        <strain>ATCC 31267 / DSM 46492 / JCM 5070 / NBRC 14893 / NCIMB 12804 / NRRL 8165 / MA-4680</strain>
    </source>
</reference>
<reference key="2">
    <citation type="journal article" date="2003" name="Nat. Biotechnol.">
        <title>Complete genome sequence and comparative analysis of the industrial microorganism Streptomyces avermitilis.</title>
        <authorList>
            <person name="Ikeda H."/>
            <person name="Ishikawa J."/>
            <person name="Hanamoto A."/>
            <person name="Shinose M."/>
            <person name="Kikuchi H."/>
            <person name="Shiba T."/>
            <person name="Sakaki Y."/>
            <person name="Hattori M."/>
            <person name="Omura S."/>
        </authorList>
    </citation>
    <scope>NUCLEOTIDE SEQUENCE [LARGE SCALE GENOMIC DNA]</scope>
    <source>
        <strain>ATCC 31267 / DSM 46492 / JCM 5070 / NBRC 14893 / NCIMB 12804 / NRRL 8165 / MA-4680</strain>
    </source>
</reference>
<accession>Q820F2</accession>
<keyword id="KW-0479">Metal-binding</keyword>
<keyword id="KW-0533">Nickel</keyword>
<keyword id="KW-1185">Reference proteome</keyword>
<keyword id="KW-0862">Zinc</keyword>
<comment type="function">
    <text evidence="1">Involved in the maturation of [NiFe] hydrogenases. Required for nickel insertion into the metal center of the hydrogenase.</text>
</comment>
<comment type="similarity">
    <text evidence="1">Belongs to the HypA/HybF family.</text>
</comment>
<dbReference type="EMBL" id="BA000030">
    <property type="protein sequence ID" value="BAC75084.1"/>
    <property type="molecule type" value="Genomic_DNA"/>
</dbReference>
<dbReference type="RefSeq" id="WP_010988768.1">
    <property type="nucleotide sequence ID" value="NZ_JZJK01000085.1"/>
</dbReference>
<dbReference type="SMR" id="Q820F2"/>
<dbReference type="GeneID" id="41544444"/>
<dbReference type="KEGG" id="sma:SAVERM_7373"/>
<dbReference type="eggNOG" id="COG0375">
    <property type="taxonomic scope" value="Bacteria"/>
</dbReference>
<dbReference type="HOGENOM" id="CLU_126929_3_0_11"/>
<dbReference type="OrthoDB" id="288014at2"/>
<dbReference type="Proteomes" id="UP000000428">
    <property type="component" value="Chromosome"/>
</dbReference>
<dbReference type="GO" id="GO:0016151">
    <property type="term" value="F:nickel cation binding"/>
    <property type="evidence" value="ECO:0007669"/>
    <property type="project" value="UniProtKB-UniRule"/>
</dbReference>
<dbReference type="GO" id="GO:0008270">
    <property type="term" value="F:zinc ion binding"/>
    <property type="evidence" value="ECO:0007669"/>
    <property type="project" value="UniProtKB-UniRule"/>
</dbReference>
<dbReference type="GO" id="GO:0051604">
    <property type="term" value="P:protein maturation"/>
    <property type="evidence" value="ECO:0007669"/>
    <property type="project" value="InterPro"/>
</dbReference>
<dbReference type="GO" id="GO:0036211">
    <property type="term" value="P:protein modification process"/>
    <property type="evidence" value="ECO:0007669"/>
    <property type="project" value="UniProtKB-UniRule"/>
</dbReference>
<dbReference type="Gene3D" id="3.30.2320.80">
    <property type="match status" value="1"/>
</dbReference>
<dbReference type="HAMAP" id="MF_00213">
    <property type="entry name" value="HypA_HybF"/>
    <property type="match status" value="1"/>
</dbReference>
<dbReference type="InterPro" id="IPR000688">
    <property type="entry name" value="HypA/HybF"/>
</dbReference>
<dbReference type="NCBIfam" id="TIGR00100">
    <property type="entry name" value="hypA"/>
    <property type="match status" value="1"/>
</dbReference>
<dbReference type="PANTHER" id="PTHR34535">
    <property type="entry name" value="HYDROGENASE MATURATION FACTOR HYPA"/>
    <property type="match status" value="1"/>
</dbReference>
<dbReference type="PANTHER" id="PTHR34535:SF3">
    <property type="entry name" value="HYDROGENASE MATURATION FACTOR HYPA"/>
    <property type="match status" value="1"/>
</dbReference>
<dbReference type="Pfam" id="PF01155">
    <property type="entry name" value="HypA"/>
    <property type="match status" value="1"/>
</dbReference>
<dbReference type="PIRSF" id="PIRSF004761">
    <property type="entry name" value="Hydrgn_mat_HypA"/>
    <property type="match status" value="1"/>
</dbReference>
<evidence type="ECO:0000255" key="1">
    <source>
        <dbReference type="HAMAP-Rule" id="MF_00213"/>
    </source>
</evidence>
<gene>
    <name evidence="1" type="primary">hypA</name>
    <name type="ordered locus">SAV_7373</name>
</gene>
<sequence length="131" mass="14055">MHEMSVALAVIDQVEQAAQQAGDVTAVRSVRLQVGELAGVVPDSLSFCFELACAGTVLEGADLVTEEVPGRARCAPCAREWSVGMPPRLSCPECGGARVDLLSGRELQIVSVHWEDGRTHAQTREPISEER</sequence>
<feature type="chain" id="PRO_0000129050" description="Hydrogenase maturation factor HypA">
    <location>
        <begin position="1"/>
        <end position="131"/>
    </location>
</feature>
<feature type="binding site" evidence="1">
    <location>
        <position position="2"/>
    </location>
    <ligand>
        <name>Ni(2+)</name>
        <dbReference type="ChEBI" id="CHEBI:49786"/>
    </ligand>
</feature>
<feature type="binding site" evidence="1">
    <location>
        <position position="74"/>
    </location>
    <ligand>
        <name>Zn(2+)</name>
        <dbReference type="ChEBI" id="CHEBI:29105"/>
    </ligand>
</feature>
<feature type="binding site" evidence="1">
    <location>
        <position position="77"/>
    </location>
    <ligand>
        <name>Zn(2+)</name>
        <dbReference type="ChEBI" id="CHEBI:29105"/>
    </ligand>
</feature>
<feature type="binding site" evidence="1">
    <location>
        <position position="91"/>
    </location>
    <ligand>
        <name>Zn(2+)</name>
        <dbReference type="ChEBI" id="CHEBI:29105"/>
    </ligand>
</feature>
<feature type="binding site" evidence="1">
    <location>
        <position position="94"/>
    </location>
    <ligand>
        <name>Zn(2+)</name>
        <dbReference type="ChEBI" id="CHEBI:29105"/>
    </ligand>
</feature>